<organism>
    <name type="scientific">Stutzerimonas stutzeri (strain A1501)</name>
    <name type="common">Pseudomonas stutzeri</name>
    <dbReference type="NCBI Taxonomy" id="379731"/>
    <lineage>
        <taxon>Bacteria</taxon>
        <taxon>Pseudomonadati</taxon>
        <taxon>Pseudomonadota</taxon>
        <taxon>Gammaproteobacteria</taxon>
        <taxon>Pseudomonadales</taxon>
        <taxon>Pseudomonadaceae</taxon>
        <taxon>Stutzerimonas</taxon>
    </lineage>
</organism>
<sequence length="231" mass="24144">MAKLTKRQKAIAEKIESGKQYAFEDAAKLLAEVSAVKFTESFDIAINLGVDPRKSDQVVRGATVLPNGTGKTVRVAVFTQGPGAEAALAAGADRVGMDDLAAEMKGGDLNYDVVIASPDAMRVVGQLGQVLGPRGLMPNPKVGTVTPDVATAVKNAKAGQVRFRTDKNGIIHTSVGKVGFDAAALKQNVEALLSDLKRLKPSTSKGIYVKRVTLSTTMGPGLVIDQASLEA</sequence>
<accession>A4VHM0</accession>
<reference key="1">
    <citation type="journal article" date="2008" name="Proc. Natl. Acad. Sci. U.S.A.">
        <title>Nitrogen fixation island and rhizosphere competence traits in the genome of root-associated Pseudomonas stutzeri A1501.</title>
        <authorList>
            <person name="Yan Y."/>
            <person name="Yang J."/>
            <person name="Dou Y."/>
            <person name="Chen M."/>
            <person name="Ping S."/>
            <person name="Peng J."/>
            <person name="Lu W."/>
            <person name="Zhang W."/>
            <person name="Yao Z."/>
            <person name="Li H."/>
            <person name="Liu W."/>
            <person name="He S."/>
            <person name="Geng L."/>
            <person name="Zhang X."/>
            <person name="Yang F."/>
            <person name="Yu H."/>
            <person name="Zhan Y."/>
            <person name="Li D."/>
            <person name="Lin Z."/>
            <person name="Wang Y."/>
            <person name="Elmerich C."/>
            <person name="Lin M."/>
            <person name="Jin Q."/>
        </authorList>
    </citation>
    <scope>NUCLEOTIDE SEQUENCE [LARGE SCALE GENOMIC DNA]</scope>
    <source>
        <strain>A1501</strain>
    </source>
</reference>
<proteinExistence type="inferred from homology"/>
<evidence type="ECO:0000255" key="1">
    <source>
        <dbReference type="HAMAP-Rule" id="MF_01318"/>
    </source>
</evidence>
<evidence type="ECO:0000305" key="2"/>
<dbReference type="EMBL" id="CP000304">
    <property type="protein sequence ID" value="ABP78471.1"/>
    <property type="molecule type" value="Genomic_DNA"/>
</dbReference>
<dbReference type="RefSeq" id="WP_011911978.1">
    <property type="nucleotide sequence ID" value="NC_009434.1"/>
</dbReference>
<dbReference type="SMR" id="A4VHM0"/>
<dbReference type="KEGG" id="psa:PST_0774"/>
<dbReference type="eggNOG" id="COG0081">
    <property type="taxonomic scope" value="Bacteria"/>
</dbReference>
<dbReference type="HOGENOM" id="CLU_062853_0_0_6"/>
<dbReference type="Proteomes" id="UP000000233">
    <property type="component" value="Chromosome"/>
</dbReference>
<dbReference type="GO" id="GO:0022625">
    <property type="term" value="C:cytosolic large ribosomal subunit"/>
    <property type="evidence" value="ECO:0007669"/>
    <property type="project" value="TreeGrafter"/>
</dbReference>
<dbReference type="GO" id="GO:0019843">
    <property type="term" value="F:rRNA binding"/>
    <property type="evidence" value="ECO:0007669"/>
    <property type="project" value="UniProtKB-UniRule"/>
</dbReference>
<dbReference type="GO" id="GO:0003735">
    <property type="term" value="F:structural constituent of ribosome"/>
    <property type="evidence" value="ECO:0007669"/>
    <property type="project" value="InterPro"/>
</dbReference>
<dbReference type="GO" id="GO:0000049">
    <property type="term" value="F:tRNA binding"/>
    <property type="evidence" value="ECO:0007669"/>
    <property type="project" value="UniProtKB-KW"/>
</dbReference>
<dbReference type="GO" id="GO:0006417">
    <property type="term" value="P:regulation of translation"/>
    <property type="evidence" value="ECO:0007669"/>
    <property type="project" value="UniProtKB-KW"/>
</dbReference>
<dbReference type="GO" id="GO:0006412">
    <property type="term" value="P:translation"/>
    <property type="evidence" value="ECO:0007669"/>
    <property type="project" value="UniProtKB-UniRule"/>
</dbReference>
<dbReference type="CDD" id="cd00403">
    <property type="entry name" value="Ribosomal_L1"/>
    <property type="match status" value="1"/>
</dbReference>
<dbReference type="FunFam" id="3.40.50.790:FF:000001">
    <property type="entry name" value="50S ribosomal protein L1"/>
    <property type="match status" value="1"/>
</dbReference>
<dbReference type="Gene3D" id="3.30.190.20">
    <property type="match status" value="1"/>
</dbReference>
<dbReference type="Gene3D" id="3.40.50.790">
    <property type="match status" value="1"/>
</dbReference>
<dbReference type="HAMAP" id="MF_01318_B">
    <property type="entry name" value="Ribosomal_uL1_B"/>
    <property type="match status" value="1"/>
</dbReference>
<dbReference type="InterPro" id="IPR005878">
    <property type="entry name" value="Ribosom_uL1_bac-type"/>
</dbReference>
<dbReference type="InterPro" id="IPR002143">
    <property type="entry name" value="Ribosomal_uL1"/>
</dbReference>
<dbReference type="InterPro" id="IPR023674">
    <property type="entry name" value="Ribosomal_uL1-like"/>
</dbReference>
<dbReference type="InterPro" id="IPR028364">
    <property type="entry name" value="Ribosomal_uL1/biogenesis"/>
</dbReference>
<dbReference type="InterPro" id="IPR016095">
    <property type="entry name" value="Ribosomal_uL1_3-a/b-sand"/>
</dbReference>
<dbReference type="InterPro" id="IPR023673">
    <property type="entry name" value="Ribosomal_uL1_CS"/>
</dbReference>
<dbReference type="NCBIfam" id="TIGR01169">
    <property type="entry name" value="rplA_bact"/>
    <property type="match status" value="1"/>
</dbReference>
<dbReference type="PANTHER" id="PTHR36427">
    <property type="entry name" value="54S RIBOSOMAL PROTEIN L1, MITOCHONDRIAL"/>
    <property type="match status" value="1"/>
</dbReference>
<dbReference type="PANTHER" id="PTHR36427:SF3">
    <property type="entry name" value="LARGE RIBOSOMAL SUBUNIT PROTEIN UL1M"/>
    <property type="match status" value="1"/>
</dbReference>
<dbReference type="Pfam" id="PF00687">
    <property type="entry name" value="Ribosomal_L1"/>
    <property type="match status" value="1"/>
</dbReference>
<dbReference type="PIRSF" id="PIRSF002155">
    <property type="entry name" value="Ribosomal_L1"/>
    <property type="match status" value="1"/>
</dbReference>
<dbReference type="SUPFAM" id="SSF56808">
    <property type="entry name" value="Ribosomal protein L1"/>
    <property type="match status" value="1"/>
</dbReference>
<dbReference type="PROSITE" id="PS01199">
    <property type="entry name" value="RIBOSOMAL_L1"/>
    <property type="match status" value="1"/>
</dbReference>
<comment type="function">
    <text evidence="1">Binds directly to 23S rRNA. The L1 stalk is quite mobile in the ribosome, and is involved in E site tRNA release.</text>
</comment>
<comment type="function">
    <text evidence="1">Protein L1 is also a translational repressor protein, it controls the translation of the L11 operon by binding to its mRNA.</text>
</comment>
<comment type="subunit">
    <text evidence="1">Part of the 50S ribosomal subunit.</text>
</comment>
<comment type="similarity">
    <text evidence="1">Belongs to the universal ribosomal protein uL1 family.</text>
</comment>
<gene>
    <name evidence="1" type="primary">rplA</name>
    <name type="ordered locus">PST_0774</name>
</gene>
<feature type="chain" id="PRO_0000308078" description="Large ribosomal subunit protein uL1">
    <location>
        <begin position="1"/>
        <end position="231"/>
    </location>
</feature>
<keyword id="KW-1185">Reference proteome</keyword>
<keyword id="KW-0678">Repressor</keyword>
<keyword id="KW-0687">Ribonucleoprotein</keyword>
<keyword id="KW-0689">Ribosomal protein</keyword>
<keyword id="KW-0694">RNA-binding</keyword>
<keyword id="KW-0699">rRNA-binding</keyword>
<keyword id="KW-0810">Translation regulation</keyword>
<keyword id="KW-0820">tRNA-binding</keyword>
<name>RL1_STUS1</name>
<protein>
    <recommendedName>
        <fullName evidence="1">Large ribosomal subunit protein uL1</fullName>
    </recommendedName>
    <alternativeName>
        <fullName evidence="2">50S ribosomal protein L1</fullName>
    </alternativeName>
</protein>